<dbReference type="EMBL" id="DS480470">
    <property type="protein sequence ID" value="EDO15260.1"/>
    <property type="molecule type" value="Genomic_DNA"/>
</dbReference>
<dbReference type="RefSeq" id="XP_001643118.1">
    <property type="nucleotide sequence ID" value="XM_001643068.1"/>
</dbReference>
<dbReference type="SMR" id="A7TR50"/>
<dbReference type="FunCoup" id="A7TR50">
    <property type="interactions" value="262"/>
</dbReference>
<dbReference type="STRING" id="436907.A7TR50"/>
<dbReference type="GeneID" id="5543328"/>
<dbReference type="KEGG" id="vpo:Kpol_461p14"/>
<dbReference type="eggNOG" id="KOG2173">
    <property type="taxonomic scope" value="Eukaryota"/>
</dbReference>
<dbReference type="HOGENOM" id="CLU_006200_1_0_1"/>
<dbReference type="InParanoid" id="A7TR50"/>
<dbReference type="OMA" id="IAEWKFR"/>
<dbReference type="OrthoDB" id="2020634at2759"/>
<dbReference type="PhylomeDB" id="A7TR50"/>
<dbReference type="Proteomes" id="UP000000267">
    <property type="component" value="Unassembled WGS sequence"/>
</dbReference>
<dbReference type="GO" id="GO:0005776">
    <property type="term" value="C:autophagosome"/>
    <property type="evidence" value="ECO:0007669"/>
    <property type="project" value="TreeGrafter"/>
</dbReference>
<dbReference type="GO" id="GO:0030659">
    <property type="term" value="C:cytoplasmic vesicle membrane"/>
    <property type="evidence" value="ECO:0007669"/>
    <property type="project" value="UniProtKB-SubCell"/>
</dbReference>
<dbReference type="GO" id="GO:0005789">
    <property type="term" value="C:endoplasmic reticulum membrane"/>
    <property type="evidence" value="ECO:0007669"/>
    <property type="project" value="UniProtKB-SubCell"/>
</dbReference>
<dbReference type="GO" id="GO:0000139">
    <property type="term" value="C:Golgi membrane"/>
    <property type="evidence" value="ECO:0007669"/>
    <property type="project" value="UniProtKB-SubCell"/>
</dbReference>
<dbReference type="GO" id="GO:0005739">
    <property type="term" value="C:mitochondrion"/>
    <property type="evidence" value="ECO:0007669"/>
    <property type="project" value="EnsemblFungi"/>
</dbReference>
<dbReference type="GO" id="GO:0061908">
    <property type="term" value="C:phagophore"/>
    <property type="evidence" value="ECO:0007669"/>
    <property type="project" value="EnsemblFungi"/>
</dbReference>
<dbReference type="GO" id="GO:0034045">
    <property type="term" value="C:phagophore assembly site membrane"/>
    <property type="evidence" value="ECO:0007669"/>
    <property type="project" value="UniProtKB-SubCell"/>
</dbReference>
<dbReference type="GO" id="GO:0017128">
    <property type="term" value="F:phospholipid scramblase activity"/>
    <property type="evidence" value="ECO:0007669"/>
    <property type="project" value="EnsemblFungi"/>
</dbReference>
<dbReference type="GO" id="GO:0032258">
    <property type="term" value="P:cytoplasm to vacuole targeting by the Cvt pathway"/>
    <property type="evidence" value="ECO:0007669"/>
    <property type="project" value="EnsemblFungi"/>
</dbReference>
<dbReference type="GO" id="GO:0000423">
    <property type="term" value="P:mitophagy"/>
    <property type="evidence" value="ECO:0007669"/>
    <property type="project" value="EnsemblFungi"/>
</dbReference>
<dbReference type="GO" id="GO:0034727">
    <property type="term" value="P:piecemeal microautophagy of the nucleus"/>
    <property type="evidence" value="ECO:0007669"/>
    <property type="project" value="EnsemblFungi"/>
</dbReference>
<dbReference type="GO" id="GO:0034497">
    <property type="term" value="P:protein localization to phagophore assembly site"/>
    <property type="evidence" value="ECO:0007669"/>
    <property type="project" value="EnsemblFungi"/>
</dbReference>
<dbReference type="GO" id="GO:0061709">
    <property type="term" value="P:reticulophagy"/>
    <property type="evidence" value="ECO:0007669"/>
    <property type="project" value="EnsemblFungi"/>
</dbReference>
<dbReference type="InterPro" id="IPR007241">
    <property type="entry name" value="Autophagy-rel_prot_9"/>
</dbReference>
<dbReference type="PANTHER" id="PTHR13038">
    <property type="entry name" value="APG9 AUTOPHAGY 9"/>
    <property type="match status" value="1"/>
</dbReference>
<dbReference type="PANTHER" id="PTHR13038:SF10">
    <property type="entry name" value="AUTOPHAGY-RELATED PROTEIN 9"/>
    <property type="match status" value="1"/>
</dbReference>
<dbReference type="Pfam" id="PF04109">
    <property type="entry name" value="ATG9"/>
    <property type="match status" value="1"/>
</dbReference>
<name>ATG9_VANPO</name>
<accession>A7TR50</accession>
<gene>
    <name type="primary">ATG9</name>
    <name type="ORF">Kpol_461p14</name>
</gene>
<comment type="function">
    <text evidence="2">Phospholipid scramblase involved in autophagy and cytoplasm to vacuole transport (Cvt) vesicle formation. Cycles between the preautophagosomal structure/phagophore assembly site (PAS) and the cytoplasmic vesicle pool and supplies membrane for the growing autophagosome. Lipid scramblase activity plays a key role in preautophagosomal structure/phagophore assembly by distributing the phospholipids that arrive through ATG2 from the cytoplasmic to the luminal leaflet of the bilayer, thereby driving autophagosomal membrane expansion. Required for mitophagy. Also involved in endoplasmic reticulum-specific autophagic process and is essential for the survival of cells subjected to severe ER stress. Different machineries are required for anterograde trafficking to the PAS during either the Cvt pathway or bulk autophagy and for retrograde trafficking.</text>
</comment>
<comment type="catalytic activity">
    <reaction evidence="2">
        <text>a 1,2-diacyl-sn-glycero-3-phosphocholine(in) = a 1,2-diacyl-sn-glycero-3-phosphocholine(out)</text>
        <dbReference type="Rhea" id="RHEA:38571"/>
        <dbReference type="ChEBI" id="CHEBI:57643"/>
    </reaction>
</comment>
<comment type="catalytic activity">
    <reaction evidence="2">
        <text>a 1,2-diacyl-sn-glycero-3-phospho-L-serine(in) = a 1,2-diacyl-sn-glycero-3-phospho-L-serine(out)</text>
        <dbReference type="Rhea" id="RHEA:38663"/>
        <dbReference type="ChEBI" id="CHEBI:57262"/>
    </reaction>
</comment>
<comment type="catalytic activity">
    <reaction evidence="2">
        <text>a 1,2-diacyl-sn-glycero-3-phosphoethanolamine(in) = a 1,2-diacyl-sn-glycero-3-phosphoethanolamine(out)</text>
        <dbReference type="Rhea" id="RHEA:38895"/>
        <dbReference type="ChEBI" id="CHEBI:64612"/>
    </reaction>
</comment>
<comment type="catalytic activity">
    <reaction evidence="2">
        <text>a 1,2-diacyl-sn-glycero-3-phospho-(1D-myo-inositol-3-phosphate)(in) = a 1,2-diacyl-sn-glycero-3-phospho-(1D-myo-inositol-3-phosphate)(out)</text>
        <dbReference type="Rhea" id="RHEA:67920"/>
        <dbReference type="ChEBI" id="CHEBI:58088"/>
    </reaction>
</comment>
<comment type="subunit">
    <text evidence="1">Homotrimer; forms a homotrimer with a central pore that forms a path between the two membrane leaflets.</text>
</comment>
<comment type="subcellular location">
    <subcellularLocation>
        <location evidence="2">Preautophagosomal structure membrane</location>
        <topology evidence="2">Multi-pass membrane protein</topology>
    </subcellularLocation>
    <subcellularLocation>
        <location evidence="2">Cytoplasmic vesicle membrane</location>
        <topology evidence="2">Multi-pass membrane protein</topology>
    </subcellularLocation>
    <subcellularLocation>
        <location evidence="2">Golgi apparatus membrane</location>
        <topology evidence="2">Multi-pass membrane protein</topology>
    </subcellularLocation>
    <subcellularLocation>
        <location evidence="2">Endoplasmic reticulum membrane</location>
        <topology evidence="2">Multi-pass membrane protein</topology>
    </subcellularLocation>
</comment>
<comment type="domain">
    <text evidence="1">Forms a homotrimer with a solvated central pore, which is connected laterally to the cytosol through the cavity within each protomer. Acts as a lipid scramblase that uses its central pore to function: the central pore opens laterally to accommodate lipid headgroups, thereby enabling lipid flipping and redistribution of lipids added to the outer leaflet of ATG9-containing vesicles, thereby enabling growth into autophagosomes.</text>
</comment>
<comment type="PTM">
    <text evidence="2">Phosphorylated by ATG1. ATG1 phosphorylation is required for preautophagosome elongation.</text>
</comment>
<comment type="similarity">
    <text evidence="5">Belongs to the ATG9 family.</text>
</comment>
<evidence type="ECO:0000250" key="1">
    <source>
        <dbReference type="UniProtKB" id="O74312"/>
    </source>
</evidence>
<evidence type="ECO:0000250" key="2">
    <source>
        <dbReference type="UniProtKB" id="Q12142"/>
    </source>
</evidence>
<evidence type="ECO:0000255" key="3"/>
<evidence type="ECO:0000256" key="4">
    <source>
        <dbReference type="SAM" id="MobiDB-lite"/>
    </source>
</evidence>
<evidence type="ECO:0000305" key="5"/>
<protein>
    <recommendedName>
        <fullName>Autophagy-related protein 9</fullName>
    </recommendedName>
</protein>
<feature type="chain" id="PRO_0000317918" description="Autophagy-related protein 9">
    <location>
        <begin position="1"/>
        <end position="961"/>
    </location>
</feature>
<feature type="topological domain" description="Cytoplasmic" evidence="5">
    <location>
        <begin position="1"/>
        <end position="324"/>
    </location>
</feature>
<feature type="transmembrane region" description="Helical" evidence="3">
    <location>
        <begin position="325"/>
        <end position="345"/>
    </location>
</feature>
<feature type="topological domain" description="Lumenal" evidence="5">
    <location>
        <begin position="346"/>
        <end position="374"/>
    </location>
</feature>
<feature type="transmembrane region" description="Helical" evidence="3">
    <location>
        <begin position="375"/>
        <end position="395"/>
    </location>
</feature>
<feature type="topological domain" description="Cytoplasmic" evidence="5">
    <location>
        <begin position="396"/>
        <end position="536"/>
    </location>
</feature>
<feature type="intramembrane region" evidence="1">
    <location>
        <begin position="537"/>
        <end position="557"/>
    </location>
</feature>
<feature type="topological domain" description="Cytoplasmic" evidence="5">
    <location>
        <begin position="558"/>
        <end position="617"/>
    </location>
</feature>
<feature type="transmembrane region" description="Helical" evidence="3">
    <location>
        <begin position="618"/>
        <end position="638"/>
    </location>
</feature>
<feature type="topological domain" description="Lumenal" evidence="5">
    <location>
        <begin position="639"/>
        <end position="654"/>
    </location>
</feature>
<feature type="transmembrane region" description="Helical" evidence="3">
    <location>
        <begin position="655"/>
        <end position="675"/>
    </location>
</feature>
<feature type="topological domain" description="Cytoplasmic" evidence="5">
    <location>
        <begin position="676"/>
        <end position="721"/>
    </location>
</feature>
<feature type="intramembrane region" evidence="1">
    <location>
        <begin position="722"/>
        <end position="742"/>
    </location>
</feature>
<feature type="topological domain" description="Cytoplasmic" evidence="5">
    <location>
        <begin position="743"/>
        <end position="961"/>
    </location>
</feature>
<feature type="region of interest" description="Disordered" evidence="4">
    <location>
        <begin position="1"/>
        <end position="91"/>
    </location>
</feature>
<feature type="region of interest" description="Disordered" evidence="4">
    <location>
        <begin position="126"/>
        <end position="180"/>
    </location>
</feature>
<feature type="region of interest" description="Disordered" evidence="4">
    <location>
        <begin position="198"/>
        <end position="225"/>
    </location>
</feature>
<feature type="region of interest" description="Disordered" evidence="4">
    <location>
        <begin position="244"/>
        <end position="265"/>
    </location>
</feature>
<feature type="region of interest" description="Disordered" evidence="4">
    <location>
        <begin position="900"/>
        <end position="940"/>
    </location>
</feature>
<feature type="compositionally biased region" description="Acidic residues" evidence="4">
    <location>
        <begin position="132"/>
        <end position="160"/>
    </location>
</feature>
<feature type="compositionally biased region" description="Polar residues" evidence="4">
    <location>
        <begin position="203"/>
        <end position="219"/>
    </location>
</feature>
<feature type="compositionally biased region" description="Polar residues" evidence="4">
    <location>
        <begin position="900"/>
        <end position="918"/>
    </location>
</feature>
<keyword id="KW-0072">Autophagy</keyword>
<keyword id="KW-0968">Cytoplasmic vesicle</keyword>
<keyword id="KW-0256">Endoplasmic reticulum</keyword>
<keyword id="KW-0333">Golgi apparatus</keyword>
<keyword id="KW-0445">Lipid transport</keyword>
<keyword id="KW-0472">Membrane</keyword>
<keyword id="KW-1185">Reference proteome</keyword>
<keyword id="KW-0812">Transmembrane</keyword>
<keyword id="KW-1133">Transmembrane helix</keyword>
<keyword id="KW-0813">Transport</keyword>
<sequence length="961" mass="110107">MGDSESVNQDHGRNTFLSRVFGLQPDDITTSIRTGDMSRYPLNAYSGGSEMFSGSPTSSRIDDDDDDDEGRVPESDQQSSSGDNSDDIKANDDVIEDVELTDGNGDNYTNSKMINTNYSIFGSLRKVGQQSSDEEDDGSLSNEEEDIDEEDEIDEIDADEPLFVNSTSQRKQKRKSSVNFKNGSEMSSLLFQRILNKKDSKSNGEASNKMFTSSNQGNHNYKYRNGHDLEGGVHFNKKEGRRNSLFGSHEAGGHKSHNSAPSKGPNLLKNISILNNTPSNKVYTLSPKERALWKWANVENLDVFLQEVYKYYLGSGFSCIVLRKLLNLTTLIFVVYISTYLGYCIDYSKLPTSSRLSDIIIDQCYTTRITGITKGLLWVFYVFVGLKVVQFYFDLQNLTDMHNFYNYLLGISDNELQTIPWQNIIQQLMYLKDQNALTANVVEVKAKNKIDPLVVANRIMRKDNYLIALYNENILDLSLPIPFYKESILTKTLEWNINLCIIGFAFNESGFIKQSFLKKSQHQFITEELRKRFMLAGFLNIILSPFLVTYFVLLYFLRYFNEFKTSPGTIGARQYTPMAEWTFREFNELYHIFQKRLGLSTVIADKYINQFPKESTDLILKFISFISGSFVAVLMSLTLLDSENFLNFEVTKDRSVLFYITVFGAIWSVCRNSISDEYKVYDPDETIKELSEFTHYLPKEWEGKHHTEDVKQEFCKLYNIRLIILLRELASLVLTPFILWFSLPACSDRIVDFFSDSSTYIDGLGYVCKYATFGINQANAQKVKGGKRHQDMKMNTNNFSNEVINESDEDVLDSDSDSEIDSNDKMMRSYMYFMEDYENSENAIGKNQLPRKKYKDPSLTNPSLNTDYSWRKQFQPGQRPELFRIGKHALQVPTNVRNLGKKSTLNSENPYDNSSNLGESFINPTIMPDRDLGRNGVNGGKKEAGMLRMVKDYYKTSDIGR</sequence>
<proteinExistence type="inferred from homology"/>
<organism>
    <name type="scientific">Vanderwaltozyma polyspora (strain ATCC 22028 / DSM 70294 / BCRC 21397 / CBS 2163 / NBRC 10782 / NRRL Y-8283 / UCD 57-17)</name>
    <name type="common">Kluyveromyces polysporus</name>
    <dbReference type="NCBI Taxonomy" id="436907"/>
    <lineage>
        <taxon>Eukaryota</taxon>
        <taxon>Fungi</taxon>
        <taxon>Dikarya</taxon>
        <taxon>Ascomycota</taxon>
        <taxon>Saccharomycotina</taxon>
        <taxon>Saccharomycetes</taxon>
        <taxon>Saccharomycetales</taxon>
        <taxon>Saccharomycetaceae</taxon>
        <taxon>Vanderwaltozyma</taxon>
    </lineage>
</organism>
<reference key="1">
    <citation type="journal article" date="2007" name="Proc. Natl. Acad. Sci. U.S.A.">
        <title>Independent sorting-out of thousands of duplicated gene pairs in two yeast species descended from a whole-genome duplication.</title>
        <authorList>
            <person name="Scannell D.R."/>
            <person name="Frank A.C."/>
            <person name="Conant G.C."/>
            <person name="Byrne K.P."/>
            <person name="Woolfit M."/>
            <person name="Wolfe K.H."/>
        </authorList>
    </citation>
    <scope>NUCLEOTIDE SEQUENCE [LARGE SCALE GENOMIC DNA]</scope>
    <source>
        <strain>ATCC 22028 / DSM 70294 / BCRC 21397 / CBS 2163 / NBRC 10782 / NRRL Y-8283 / UCD 57-17</strain>
    </source>
</reference>